<sequence length="153" mass="16155">MMTGELILVGLIVIGLIGRSPIIATAACVLLAVKLLHLSRFLPSIERRGLELGLLFLTLSVLVPFASGKVQMKELIAAFNTWPGWLALIGGAVAAYMNAKGLDLLKLDPQMVVGLVIGSIFGIIFLRGIPVGPLMAAGITAILYKLFKLMSGG</sequence>
<dbReference type="EMBL" id="CP001656">
    <property type="protein sequence ID" value="ACT00946.1"/>
    <property type="molecule type" value="Genomic_DNA"/>
</dbReference>
<dbReference type="STRING" id="324057.Pjdr2_2290"/>
<dbReference type="KEGG" id="pjd:Pjdr2_2290"/>
<dbReference type="eggNOG" id="COG2707">
    <property type="taxonomic scope" value="Bacteria"/>
</dbReference>
<dbReference type="HOGENOM" id="CLU_125889_1_0_9"/>
<dbReference type="GO" id="GO:0005886">
    <property type="term" value="C:plasma membrane"/>
    <property type="evidence" value="ECO:0007669"/>
    <property type="project" value="UniProtKB-SubCell"/>
</dbReference>
<dbReference type="HAMAP" id="MF_01874">
    <property type="entry name" value="UPF0756"/>
    <property type="match status" value="1"/>
</dbReference>
<dbReference type="InterPro" id="IPR007382">
    <property type="entry name" value="UPF0756_TM"/>
</dbReference>
<dbReference type="PANTHER" id="PTHR38452">
    <property type="entry name" value="UPF0756 MEMBRANE PROTEIN YEAL"/>
    <property type="match status" value="1"/>
</dbReference>
<dbReference type="PANTHER" id="PTHR38452:SF1">
    <property type="entry name" value="UPF0756 MEMBRANE PROTEIN YEAL"/>
    <property type="match status" value="1"/>
</dbReference>
<dbReference type="Pfam" id="PF04284">
    <property type="entry name" value="DUF441"/>
    <property type="match status" value="1"/>
</dbReference>
<accession>C6CU08</accession>
<evidence type="ECO:0000255" key="1">
    <source>
        <dbReference type="HAMAP-Rule" id="MF_01874"/>
    </source>
</evidence>
<feature type="chain" id="PRO_0000388913" description="UPF0756 membrane protein Pjdr2_2290">
    <location>
        <begin position="1"/>
        <end position="153"/>
    </location>
</feature>
<feature type="transmembrane region" description="Helical" evidence="1">
    <location>
        <begin position="6"/>
        <end position="26"/>
    </location>
</feature>
<feature type="transmembrane region" description="Helical" evidence="1">
    <location>
        <begin position="50"/>
        <end position="70"/>
    </location>
</feature>
<feature type="transmembrane region" description="Helical" evidence="1">
    <location>
        <begin position="75"/>
        <end position="95"/>
    </location>
</feature>
<feature type="transmembrane region" description="Helical" evidence="1">
    <location>
        <begin position="111"/>
        <end position="131"/>
    </location>
</feature>
<feature type="transmembrane region" description="Helical" evidence="1">
    <location>
        <begin position="132"/>
        <end position="152"/>
    </location>
</feature>
<organism>
    <name type="scientific">Paenibacillus sp. (strain JDR-2)</name>
    <dbReference type="NCBI Taxonomy" id="324057"/>
    <lineage>
        <taxon>Bacteria</taxon>
        <taxon>Bacillati</taxon>
        <taxon>Bacillota</taxon>
        <taxon>Bacilli</taxon>
        <taxon>Bacillales</taxon>
        <taxon>Paenibacillaceae</taxon>
        <taxon>Paenibacillus</taxon>
    </lineage>
</organism>
<protein>
    <recommendedName>
        <fullName evidence="1">UPF0756 membrane protein Pjdr2_2290</fullName>
    </recommendedName>
</protein>
<name>Y2290_PAESJ</name>
<reference key="1">
    <citation type="journal article" date="2012" name="Stand. Genomic Sci.">
        <title>Complete genome sequence of Paenibacillus sp. strain JDR-2.</title>
        <authorList>
            <person name="Chow V."/>
            <person name="Nong G."/>
            <person name="St John F.J."/>
            <person name="Rice J.D."/>
            <person name="Dickstein E."/>
            <person name="Chertkov O."/>
            <person name="Bruce D."/>
            <person name="Detter C."/>
            <person name="Brettin T."/>
            <person name="Han J."/>
            <person name="Woyke T."/>
            <person name="Pitluck S."/>
            <person name="Nolan M."/>
            <person name="Pati A."/>
            <person name="Martin J."/>
            <person name="Copeland A."/>
            <person name="Land M.L."/>
            <person name="Goodwin L."/>
            <person name="Jones J.B."/>
            <person name="Ingram L.O."/>
            <person name="Shanmugam K.T."/>
            <person name="Preston J.F."/>
        </authorList>
    </citation>
    <scope>NUCLEOTIDE SEQUENCE [LARGE SCALE GENOMIC DNA]</scope>
    <source>
        <strain>JDR-2</strain>
    </source>
</reference>
<proteinExistence type="inferred from homology"/>
<gene>
    <name type="ordered locus">Pjdr2_2290</name>
</gene>
<comment type="subcellular location">
    <subcellularLocation>
        <location evidence="1">Cell membrane</location>
        <topology evidence="1">Multi-pass membrane protein</topology>
    </subcellularLocation>
</comment>
<comment type="similarity">
    <text evidence="1">Belongs to the UPF0756 family.</text>
</comment>
<keyword id="KW-1003">Cell membrane</keyword>
<keyword id="KW-0472">Membrane</keyword>
<keyword id="KW-0812">Transmembrane</keyword>
<keyword id="KW-1133">Transmembrane helix</keyword>